<sequence>IQPPKNLLFSSLLFSSLLFSSAAQAASEDRRSPYYVQADLAYAAERITHDYPQATGANNTSTVSDYFRNIRAHSIHPRVSVGYDFGGWRIAADYASYRKWNNNKYSVNTKELENKHNNKKDLKTENQENGTFHAASSLGLSAIYDFKLKGKFKPYIGARVAYGHVRHSID</sequence>
<evidence type="ECO:0000305" key="1"/>
<comment type="subcellular location">
    <subcellularLocation>
        <location>Cell outer membrane</location>
    </subcellularLocation>
</comment>
<comment type="similarity">
    <text evidence="1">Belongs to the opacity porin family.</text>
</comment>
<reference key="1">
    <citation type="journal article" date="1987" name="Mol. Microbiol.">
        <title>Common mechanism controlling phase and antigenic variation in pathogenic neisseriae.</title>
        <authorList>
            <person name="Stern A."/>
            <person name="Meyer T.F."/>
        </authorList>
    </citation>
    <scope>NUCLEOTIDE SEQUENCE [GENOMIC DNA]</scope>
    <source>
        <strain>C1938 / Serogroup C</strain>
    </source>
</reference>
<dbReference type="EMBL" id="X06446">
    <property type="protein sequence ID" value="CAA29749.1"/>
    <property type="status" value="ALT_SEQ"/>
    <property type="molecule type" value="Genomic_DNA"/>
</dbReference>
<dbReference type="PIR" id="S08513">
    <property type="entry name" value="S08513"/>
</dbReference>
<dbReference type="PIR" id="T10256">
    <property type="entry name" value="T10256"/>
</dbReference>
<dbReference type="SMR" id="P10171"/>
<dbReference type="GO" id="GO:0009279">
    <property type="term" value="C:cell outer membrane"/>
    <property type="evidence" value="ECO:0007669"/>
    <property type="project" value="UniProtKB-SubCell"/>
</dbReference>
<dbReference type="GO" id="GO:0015288">
    <property type="term" value="F:porin activity"/>
    <property type="evidence" value="ECO:0007669"/>
    <property type="project" value="InterPro"/>
</dbReference>
<dbReference type="Gene3D" id="2.40.160.20">
    <property type="match status" value="1"/>
</dbReference>
<dbReference type="InterPro" id="IPR011250">
    <property type="entry name" value="OMP/PagP_b-brl"/>
</dbReference>
<dbReference type="InterPro" id="IPR003394">
    <property type="entry name" value="Porin_opacity"/>
</dbReference>
<dbReference type="Pfam" id="PF02462">
    <property type="entry name" value="Opacity"/>
    <property type="match status" value="1"/>
</dbReference>
<dbReference type="SUPFAM" id="SSF56925">
    <property type="entry name" value="OMPA-like"/>
    <property type="match status" value="1"/>
</dbReference>
<proteinExistence type="inferred from homology"/>
<keyword id="KW-0998">Cell outer membrane</keyword>
<keyword id="KW-0472">Membrane</keyword>
<keyword id="KW-0812">Transmembrane</keyword>
<keyword id="KW-1134">Transmembrane beta strand</keyword>
<accession>P10171</accession>
<organism>
    <name type="scientific">Neisseria meningitidis serogroup C</name>
    <dbReference type="NCBI Taxonomy" id="135720"/>
    <lineage>
        <taxon>Bacteria</taxon>
        <taxon>Pseudomonadati</taxon>
        <taxon>Pseudomonadota</taxon>
        <taxon>Betaproteobacteria</taxon>
        <taxon>Neisseriales</taxon>
        <taxon>Neisseriaceae</taxon>
        <taxon>Neisseria</taxon>
    </lineage>
</organism>
<feature type="chain" id="PRO_0000058063" description="Opacity-related protein POPM3">
    <location>
        <begin position="1"/>
        <end position="170"/>
    </location>
</feature>
<name>OPR3_NEIMC</name>
<gene>
    <name type="primary">opr</name>
</gene>
<protein>
    <recommendedName>
        <fullName>Opacity-related protein POPM3</fullName>
    </recommendedName>
</protein>